<evidence type="ECO:0000250" key="1"/>
<evidence type="ECO:0000250" key="2">
    <source>
        <dbReference type="UniProtKB" id="P08559"/>
    </source>
</evidence>
<evidence type="ECO:0000269" key="3">
    <source>
    </source>
</evidence>
<evidence type="ECO:0000269" key="4">
    <source>
    </source>
</evidence>
<evidence type="ECO:0000269" key="5">
    <source>
    </source>
</evidence>
<evidence type="ECO:0000269" key="6">
    <source>
    </source>
</evidence>
<evidence type="ECO:0000269" key="7">
    <source>
    </source>
</evidence>
<evidence type="ECO:0000269" key="8">
    <source>
    </source>
</evidence>
<evidence type="ECO:0000305" key="9"/>
<feature type="transit peptide" description="Mitochondrion" evidence="1">
    <location>
        <begin position="1"/>
        <end position="27"/>
    </location>
</feature>
<feature type="chain" id="PRO_0000020447" description="Pyruvate dehydrogenase E1 component subunit alpha, testis-specific form, mitochondrial">
    <location>
        <begin position="28"/>
        <end position="388"/>
    </location>
</feature>
<feature type="binding site" evidence="2">
    <location>
        <position position="90"/>
    </location>
    <ligand>
        <name>pyruvate</name>
        <dbReference type="ChEBI" id="CHEBI:15361"/>
    </ligand>
</feature>
<feature type="binding site" evidence="2">
    <location>
        <position position="116"/>
    </location>
    <ligand>
        <name>pyruvate</name>
        <dbReference type="ChEBI" id="CHEBI:15361"/>
    </ligand>
</feature>
<feature type="binding site" evidence="2">
    <location>
        <position position="116"/>
    </location>
    <ligand>
        <name>thiamine diphosphate</name>
        <dbReference type="ChEBI" id="CHEBI:58937"/>
        <note>ligand shared with beta subunit</note>
    </ligand>
</feature>
<feature type="binding site" evidence="2">
    <location>
        <position position="117"/>
    </location>
    <ligand>
        <name>pyruvate</name>
        <dbReference type="ChEBI" id="CHEBI:15361"/>
    </ligand>
</feature>
<feature type="binding site" evidence="2">
    <location>
        <position position="117"/>
    </location>
    <ligand>
        <name>thiamine diphosphate</name>
        <dbReference type="ChEBI" id="CHEBI:58937"/>
        <note>ligand shared with beta subunit</note>
    </ligand>
</feature>
<feature type="binding site" evidence="2">
    <location>
        <position position="163"/>
    </location>
    <ligand>
        <name>pyruvate</name>
        <dbReference type="ChEBI" id="CHEBI:15361"/>
    </ligand>
</feature>
<feature type="binding site" evidence="2">
    <location>
        <position position="163"/>
    </location>
    <ligand>
        <name>thiamine diphosphate</name>
        <dbReference type="ChEBI" id="CHEBI:58937"/>
        <note>ligand shared with beta subunit</note>
    </ligand>
</feature>
<feature type="binding site" evidence="2">
    <location>
        <position position="165"/>
    </location>
    <ligand>
        <name>pyruvate</name>
        <dbReference type="ChEBI" id="CHEBI:15361"/>
    </ligand>
</feature>
<feature type="binding site" evidence="2">
    <location>
        <position position="165"/>
    </location>
    <ligand>
        <name>thiamine diphosphate</name>
        <dbReference type="ChEBI" id="CHEBI:58937"/>
        <note>ligand shared with beta subunit</note>
    </ligand>
</feature>
<feature type="binding site" evidence="2">
    <location>
        <position position="194"/>
    </location>
    <ligand>
        <name>Mg(2+)</name>
        <dbReference type="ChEBI" id="CHEBI:18420"/>
    </ligand>
</feature>
<feature type="binding site" evidence="2">
    <location>
        <position position="194"/>
    </location>
    <ligand>
        <name>pyruvate</name>
        <dbReference type="ChEBI" id="CHEBI:15361"/>
    </ligand>
</feature>
<feature type="binding site" evidence="2">
    <location>
        <position position="194"/>
    </location>
    <ligand>
        <name>thiamine diphosphate</name>
        <dbReference type="ChEBI" id="CHEBI:58937"/>
        <note>ligand shared with beta subunit</note>
    </ligand>
</feature>
<feature type="binding site" evidence="2">
    <location>
        <position position="195"/>
    </location>
    <ligand>
        <name>pyruvate</name>
        <dbReference type="ChEBI" id="CHEBI:15361"/>
    </ligand>
</feature>
<feature type="binding site" evidence="2">
    <location>
        <position position="195"/>
    </location>
    <ligand>
        <name>thiamine diphosphate</name>
        <dbReference type="ChEBI" id="CHEBI:58937"/>
        <note>ligand shared with beta subunit</note>
    </ligand>
</feature>
<feature type="binding site" evidence="2">
    <location>
        <position position="196"/>
    </location>
    <ligand>
        <name>pyruvate</name>
        <dbReference type="ChEBI" id="CHEBI:15361"/>
    </ligand>
</feature>
<feature type="binding site" evidence="2">
    <location>
        <position position="196"/>
    </location>
    <ligand>
        <name>thiamine diphosphate</name>
        <dbReference type="ChEBI" id="CHEBI:58937"/>
        <note>ligand shared with beta subunit</note>
    </ligand>
</feature>
<feature type="binding site" evidence="2">
    <location>
        <position position="223"/>
    </location>
    <ligand>
        <name>Mg(2+)</name>
        <dbReference type="ChEBI" id="CHEBI:18420"/>
    </ligand>
</feature>
<feature type="binding site" evidence="2">
    <location>
        <position position="223"/>
    </location>
    <ligand>
        <name>pyruvate</name>
        <dbReference type="ChEBI" id="CHEBI:15361"/>
    </ligand>
</feature>
<feature type="binding site" evidence="2">
    <location>
        <position position="223"/>
    </location>
    <ligand>
        <name>thiamine diphosphate</name>
        <dbReference type="ChEBI" id="CHEBI:58937"/>
        <note>ligand shared with beta subunit</note>
    </ligand>
</feature>
<feature type="binding site" evidence="2">
    <location>
        <position position="225"/>
    </location>
    <ligand>
        <name>Mg(2+)</name>
        <dbReference type="ChEBI" id="CHEBI:18420"/>
    </ligand>
</feature>
<feature type="binding site" evidence="2">
    <location>
        <position position="225"/>
    </location>
    <ligand>
        <name>pyruvate</name>
        <dbReference type="ChEBI" id="CHEBI:15361"/>
    </ligand>
</feature>
<feature type="binding site" evidence="2">
    <location>
        <position position="290"/>
    </location>
    <ligand>
        <name>thiamine diphosphate</name>
        <dbReference type="ChEBI" id="CHEBI:58937"/>
        <note>ligand shared with beta subunit</note>
    </ligand>
</feature>
<feature type="modified residue" description="Phosphoserine; by PDK1, PDK2, PDK3 and PDK4" evidence="4 7">
    <location>
        <position position="291"/>
    </location>
</feature>
<feature type="modified residue" description="Phosphoserine" evidence="7">
    <location>
        <position position="293"/>
    </location>
</feature>
<feature type="modified residue" description="Phosphoserine; by PDK3" evidence="4">
    <location>
        <position position="298"/>
    </location>
</feature>
<feature type="sequence variant" id="VAR_087365" description="In SPGF70; uncertain significance; dbSNP:rs200969445." evidence="6 8">
    <original>M</original>
    <variation>V</variation>
    <location>
        <position position="227"/>
    </location>
</feature>
<feature type="sequence variant" id="VAR_034359" description="In dbSNP:rs17024795.">
    <original>R</original>
    <variation>G</variation>
    <location>
        <position position="376"/>
    </location>
</feature>
<feature type="mutagenesis site" description="Slightly reduces enzyme activity." evidence="4">
    <original>S</original>
    <variation>A</variation>
    <location>
        <position position="230"/>
    </location>
</feature>
<feature type="mutagenesis site" description="Strongly reduces enzyme activity. Increases enzyme activity in stem cells." evidence="4 7">
    <original>S</original>
    <variation>A</variation>
    <location>
        <position position="291"/>
    </location>
</feature>
<feature type="mutagenesis site" description="Abolishes enzyme activity. Increases neuronal cell death in response to glutamate excitotoxicity." evidence="4 7">
    <original>S</original>
    <variation>E</variation>
    <variation>D</variation>
    <location>
        <position position="291"/>
    </location>
</feature>
<feature type="mutagenesis site" description="Increases enzyme activity in stem cells." evidence="7">
    <original>S</original>
    <variation>A</variation>
    <location>
        <position position="293"/>
    </location>
</feature>
<feature type="mutagenesis site" description="Abolishes enzyme activity. Increases neuronal cell death in response to glutamate excitotoxicity." evidence="7">
    <original>S</original>
    <variation>D</variation>
    <location>
        <position position="293"/>
    </location>
</feature>
<feature type="mutagenesis site" description="Slightly reduces enzyme activity." evidence="4">
    <original>S</original>
    <variation>A</variation>
    <location>
        <position position="298"/>
    </location>
</feature>
<feature type="sequence conflict" description="In Ref. 3; AAH66953." evidence="9" ref="3">
    <original>L</original>
    <variation>P</variation>
    <location>
        <position position="127"/>
    </location>
</feature>
<name>ODPAT_HUMAN</name>
<gene>
    <name type="primary">PDHA2</name>
    <name type="synonym">PDHAL</name>
</gene>
<keyword id="KW-0119">Carbohydrate metabolism</keyword>
<keyword id="KW-0313">Glucose metabolism</keyword>
<keyword id="KW-0460">Magnesium</keyword>
<keyword id="KW-0479">Metal-binding</keyword>
<keyword id="KW-0496">Mitochondrion</keyword>
<keyword id="KW-0560">Oxidoreductase</keyword>
<keyword id="KW-0597">Phosphoprotein</keyword>
<keyword id="KW-1267">Proteomics identification</keyword>
<keyword id="KW-0670">Pyruvate</keyword>
<keyword id="KW-1185">Reference proteome</keyword>
<keyword id="KW-0786">Thiamine pyrophosphate</keyword>
<keyword id="KW-0809">Transit peptide</keyword>
<keyword id="KW-0816">Tricarboxylic acid cycle</keyword>
<organism>
    <name type="scientific">Homo sapiens</name>
    <name type="common">Human</name>
    <dbReference type="NCBI Taxonomy" id="9606"/>
    <lineage>
        <taxon>Eukaryota</taxon>
        <taxon>Metazoa</taxon>
        <taxon>Chordata</taxon>
        <taxon>Craniata</taxon>
        <taxon>Vertebrata</taxon>
        <taxon>Euteleostomi</taxon>
        <taxon>Mammalia</taxon>
        <taxon>Eutheria</taxon>
        <taxon>Euarchontoglires</taxon>
        <taxon>Primates</taxon>
        <taxon>Haplorrhini</taxon>
        <taxon>Catarrhini</taxon>
        <taxon>Hominidae</taxon>
        <taxon>Homo</taxon>
    </lineage>
</organism>
<protein>
    <recommendedName>
        <fullName>Pyruvate dehydrogenase E1 component subunit alpha, testis-specific form, mitochondrial</fullName>
        <ecNumber>1.2.4.1</ecNumber>
    </recommendedName>
    <alternativeName>
        <fullName>PDHE1-A type II</fullName>
    </alternativeName>
</protein>
<comment type="function">
    <text evidence="4">The pyruvate dehydrogenase complex catalyzes the overall conversion of pyruvate to acetyl-CoA and CO(2), and thereby links the glycolytic pathway to the tricarboxylic cycle.</text>
</comment>
<comment type="catalytic activity">
    <reaction evidence="4">
        <text>N(6)-[(R)-lipoyl]-L-lysyl-[protein] + pyruvate + H(+) = N(6)-[(R)-S(8)-acetyldihydrolipoyl]-L-lysyl-[protein] + CO2</text>
        <dbReference type="Rhea" id="RHEA:19189"/>
        <dbReference type="Rhea" id="RHEA-COMP:10474"/>
        <dbReference type="Rhea" id="RHEA-COMP:10478"/>
        <dbReference type="ChEBI" id="CHEBI:15361"/>
        <dbReference type="ChEBI" id="CHEBI:15378"/>
        <dbReference type="ChEBI" id="CHEBI:16526"/>
        <dbReference type="ChEBI" id="CHEBI:83099"/>
        <dbReference type="ChEBI" id="CHEBI:83111"/>
        <dbReference type="EC" id="1.2.4.1"/>
    </reaction>
</comment>
<comment type="cofactor">
    <cofactor evidence="2">
        <name>thiamine diphosphate</name>
        <dbReference type="ChEBI" id="CHEBI:58937"/>
    </cofactor>
    <cofactor evidence="2">
        <name>Mg(2+)</name>
        <dbReference type="ChEBI" id="CHEBI:18420"/>
    </cofactor>
</comment>
<comment type="activity regulation">
    <text>Pyruvate dehydrogenase activity is inhibited by phosphorylation of PDHA2; it is reactivated by dephosphorylation.</text>
</comment>
<comment type="subunit">
    <text evidence="3">Heterotetramer of two PDHA2 and two PDHB subunits. The heterotetramer interacts with DLAT, and is part of the multimeric pyruvate dehydrogenase complex that contains multiple copies of pyruvate dehydrogenase (E1), dihydrolipoamide acetyltransferase (DLAT, E2) and lipoamide dehydrogenase (DLD, E3). These subunits are bound to an inner core composed of about 48 DLAT and 12 PDHX molecules.</text>
</comment>
<comment type="interaction">
    <interactant intactId="EBI-2957428">
        <id>P29803</id>
    </interactant>
    <interactant intactId="EBI-16439278">
        <id>Q6FHY5</id>
        <label>MEOX2</label>
    </interactant>
    <organismsDiffer>false</organismsDiffer>
    <experiments>3</experiments>
</comment>
<comment type="subcellular location">
    <subcellularLocation>
        <location>Mitochondrion matrix</location>
    </subcellularLocation>
</comment>
<comment type="tissue specificity">
    <text evidence="5">Testis. Expressed in postmeiotic spermatogenic cells.</text>
</comment>
<comment type="PTM">
    <text evidence="4">Phosphorylation at Ser-291, Ser-293 and Ser-298 by PDK family kinases inactivates the enzyme; for this phosphorylation at a single site is sufficient. Phosphorylation at Ser-293 interferes with access to active site, and thereby inactivates the enzyme. Dephosphorylation at all three sites, i.e. at Ser-291, Ser-293 and Ser-298, is required for reactivation.</text>
</comment>
<comment type="disease" evidence="6 8">
    <disease id="DI-06391">
        <name>Spermatogenic failure 70</name>
        <acronym>SPGF70</acronym>
        <description>An autosomal recessive male infertility disorder characterized by azoospermia, sperm immotility or necrozoospermia. Hypospermatogenesis and meiotic arrest have also been observed.</description>
        <dbReference type="MIM" id="619828"/>
    </disease>
    <text>The disease may be caused by variants affecting the gene represented in this entry.</text>
</comment>
<comment type="sequence caution" evidence="9">
    <conflict type="erroneous initiation">
        <sequence resource="EMBL-CDS" id="AAH94760"/>
    </conflict>
    <text>Extended N-terminus.</text>
</comment>
<dbReference type="EC" id="1.2.4.1"/>
<dbReference type="EMBL" id="M86808">
    <property type="protein sequence ID" value="AAA60232.1"/>
    <property type="molecule type" value="Genomic_DNA"/>
</dbReference>
<dbReference type="EMBL" id="AK313872">
    <property type="protein sequence ID" value="BAG36600.1"/>
    <property type="molecule type" value="mRNA"/>
</dbReference>
<dbReference type="EMBL" id="BC030697">
    <property type="protein sequence ID" value="AAH30697.3"/>
    <property type="molecule type" value="mRNA"/>
</dbReference>
<dbReference type="EMBL" id="BC066953">
    <property type="protein sequence ID" value="AAH66953.2"/>
    <property type="molecule type" value="mRNA"/>
</dbReference>
<dbReference type="EMBL" id="BC094760">
    <property type="protein sequence ID" value="AAH94760.1"/>
    <property type="status" value="ALT_INIT"/>
    <property type="molecule type" value="mRNA"/>
</dbReference>
<dbReference type="EMBL" id="BC119656">
    <property type="protein sequence ID" value="AAI19657.1"/>
    <property type="molecule type" value="mRNA"/>
</dbReference>
<dbReference type="EMBL" id="BC119657">
    <property type="protein sequence ID" value="AAI19658.1"/>
    <property type="molecule type" value="mRNA"/>
</dbReference>
<dbReference type="EMBL" id="BC127637">
    <property type="protein sequence ID" value="AAI27638.1"/>
    <property type="molecule type" value="mRNA"/>
</dbReference>
<dbReference type="EMBL" id="BC127638">
    <property type="protein sequence ID" value="AAI27639.1"/>
    <property type="molecule type" value="mRNA"/>
</dbReference>
<dbReference type="CCDS" id="CCDS3644.1"/>
<dbReference type="PIR" id="A37104">
    <property type="entry name" value="DEHUPT"/>
</dbReference>
<dbReference type="RefSeq" id="NP_005381.1">
    <property type="nucleotide sequence ID" value="NM_005390.5"/>
</dbReference>
<dbReference type="SMR" id="P29803"/>
<dbReference type="BioGRID" id="111187">
    <property type="interactions" value="21"/>
</dbReference>
<dbReference type="ComplexPortal" id="CPX-6242">
    <property type="entry name" value="Mitochondrial pyruvate dehydrogenase complex, testis-specific variant"/>
</dbReference>
<dbReference type="FunCoup" id="P29803">
    <property type="interactions" value="908"/>
</dbReference>
<dbReference type="IntAct" id="P29803">
    <property type="interactions" value="11"/>
</dbReference>
<dbReference type="MINT" id="P29803"/>
<dbReference type="STRING" id="9606.ENSP00000295266"/>
<dbReference type="DrugBank" id="DB00157">
    <property type="generic name" value="NADH"/>
</dbReference>
<dbReference type="iPTMnet" id="P29803"/>
<dbReference type="PhosphoSitePlus" id="P29803"/>
<dbReference type="BioMuta" id="PDHA2"/>
<dbReference type="jPOST" id="P29803"/>
<dbReference type="MassIVE" id="P29803"/>
<dbReference type="PaxDb" id="9606-ENSP00000295266"/>
<dbReference type="PeptideAtlas" id="P29803"/>
<dbReference type="ProteomicsDB" id="54610"/>
<dbReference type="Antibodypedia" id="25781">
    <property type="antibodies" value="154 antibodies from 26 providers"/>
</dbReference>
<dbReference type="DNASU" id="5161"/>
<dbReference type="Ensembl" id="ENST00000295266.6">
    <property type="protein sequence ID" value="ENSP00000295266.4"/>
    <property type="gene ID" value="ENSG00000163114.6"/>
</dbReference>
<dbReference type="GeneID" id="5161"/>
<dbReference type="KEGG" id="hsa:5161"/>
<dbReference type="MANE-Select" id="ENST00000295266.6">
    <property type="protein sequence ID" value="ENSP00000295266.4"/>
    <property type="RefSeq nucleotide sequence ID" value="NM_005390.5"/>
    <property type="RefSeq protein sequence ID" value="NP_005381.1"/>
</dbReference>
<dbReference type="UCSC" id="uc003htr.5">
    <property type="organism name" value="human"/>
</dbReference>
<dbReference type="AGR" id="HGNC:8807"/>
<dbReference type="CTD" id="5161"/>
<dbReference type="DisGeNET" id="5161"/>
<dbReference type="GeneCards" id="PDHA2"/>
<dbReference type="HGNC" id="HGNC:8807">
    <property type="gene designation" value="PDHA2"/>
</dbReference>
<dbReference type="HPA" id="ENSG00000163114">
    <property type="expression patterns" value="Tissue enriched (testis)"/>
</dbReference>
<dbReference type="MalaCards" id="PDHA2"/>
<dbReference type="MIM" id="179061">
    <property type="type" value="gene"/>
</dbReference>
<dbReference type="MIM" id="619828">
    <property type="type" value="phenotype"/>
</dbReference>
<dbReference type="neXtProt" id="NX_P29803"/>
<dbReference type="OpenTargets" id="ENSG00000163114"/>
<dbReference type="Orphanet" id="399805">
    <property type="disease" value="Male infertility with azoospermia or oligozoospermia due to single gene mutation"/>
</dbReference>
<dbReference type="PharmGKB" id="PA33151"/>
<dbReference type="VEuPathDB" id="HostDB:ENSG00000163114"/>
<dbReference type="eggNOG" id="KOG0225">
    <property type="taxonomic scope" value="Eukaryota"/>
</dbReference>
<dbReference type="GeneTree" id="ENSGT00530000063174"/>
<dbReference type="HOGENOM" id="CLU_029393_5_2_1"/>
<dbReference type="InParanoid" id="P29803"/>
<dbReference type="OMA" id="SKRDPIM"/>
<dbReference type="OrthoDB" id="10256198at2759"/>
<dbReference type="PAN-GO" id="P29803">
    <property type="GO annotations" value="2 GO annotations based on evolutionary models"/>
</dbReference>
<dbReference type="PhylomeDB" id="P29803"/>
<dbReference type="TreeFam" id="TF300742"/>
<dbReference type="PathwayCommons" id="P29803"/>
<dbReference type="Reactome" id="R-HSA-204174">
    <property type="pathway name" value="Regulation of pyruvate dehydrogenase (PDH) complex"/>
</dbReference>
<dbReference type="Reactome" id="R-HSA-5362517">
    <property type="pathway name" value="Signaling by Retinoic Acid"/>
</dbReference>
<dbReference type="Reactome" id="R-HSA-9861559">
    <property type="pathway name" value="PDH complex synthesizes acetyl-CoA from PYR"/>
</dbReference>
<dbReference type="SignaLink" id="P29803"/>
<dbReference type="SIGNOR" id="P29803"/>
<dbReference type="BioGRID-ORCS" id="5161">
    <property type="hits" value="13 hits in 1155 CRISPR screens"/>
</dbReference>
<dbReference type="CD-CODE" id="91857CE7">
    <property type="entry name" value="Nucleolus"/>
</dbReference>
<dbReference type="ChiTaRS" id="PDHA2">
    <property type="organism name" value="human"/>
</dbReference>
<dbReference type="GeneWiki" id="Pyruvate_dehydrogenase_(lipoamide)_alpha_2"/>
<dbReference type="GenomeRNAi" id="5161"/>
<dbReference type="Pharos" id="P29803">
    <property type="development level" value="Tbio"/>
</dbReference>
<dbReference type="PRO" id="PR:P29803"/>
<dbReference type="Proteomes" id="UP000005640">
    <property type="component" value="Chromosome 4"/>
</dbReference>
<dbReference type="RNAct" id="P29803">
    <property type="molecule type" value="protein"/>
</dbReference>
<dbReference type="Bgee" id="ENSG00000163114">
    <property type="expression patterns" value="Expressed in sperm and 28 other cell types or tissues"/>
</dbReference>
<dbReference type="GO" id="GO:0005759">
    <property type="term" value="C:mitochondrial matrix"/>
    <property type="evidence" value="ECO:0000304"/>
    <property type="project" value="Reactome"/>
</dbReference>
<dbReference type="GO" id="GO:0005739">
    <property type="term" value="C:mitochondrion"/>
    <property type="evidence" value="ECO:0000314"/>
    <property type="project" value="HPA"/>
</dbReference>
<dbReference type="GO" id="GO:0005730">
    <property type="term" value="C:nucleolus"/>
    <property type="evidence" value="ECO:0000314"/>
    <property type="project" value="HPA"/>
</dbReference>
<dbReference type="GO" id="GO:0005634">
    <property type="term" value="C:nucleus"/>
    <property type="evidence" value="ECO:0007005"/>
    <property type="project" value="UniProtKB"/>
</dbReference>
<dbReference type="GO" id="GO:0045254">
    <property type="term" value="C:pyruvate dehydrogenase complex"/>
    <property type="evidence" value="ECO:0000250"/>
    <property type="project" value="ComplexPortal"/>
</dbReference>
<dbReference type="GO" id="GO:0046872">
    <property type="term" value="F:metal ion binding"/>
    <property type="evidence" value="ECO:0007669"/>
    <property type="project" value="UniProtKB-KW"/>
</dbReference>
<dbReference type="GO" id="GO:0004739">
    <property type="term" value="F:pyruvate dehydrogenase (acetyl-transferring) activity"/>
    <property type="evidence" value="ECO:0000314"/>
    <property type="project" value="UniProtKB"/>
</dbReference>
<dbReference type="GO" id="GO:0034604">
    <property type="term" value="F:pyruvate dehydrogenase (NAD+) activity"/>
    <property type="evidence" value="ECO:0000314"/>
    <property type="project" value="MGI"/>
</dbReference>
<dbReference type="GO" id="GO:0006006">
    <property type="term" value="P:glucose metabolic process"/>
    <property type="evidence" value="ECO:0007669"/>
    <property type="project" value="UniProtKB-KW"/>
</dbReference>
<dbReference type="GO" id="GO:0006086">
    <property type="term" value="P:pyruvate decarboxylation to acetyl-CoA"/>
    <property type="evidence" value="ECO:0000250"/>
    <property type="project" value="ComplexPortal"/>
</dbReference>
<dbReference type="GO" id="GO:0006090">
    <property type="term" value="P:pyruvate metabolic process"/>
    <property type="evidence" value="ECO:0000314"/>
    <property type="project" value="UniProtKB"/>
</dbReference>
<dbReference type="GO" id="GO:0006099">
    <property type="term" value="P:tricarboxylic acid cycle"/>
    <property type="evidence" value="ECO:0007669"/>
    <property type="project" value="UniProtKB-KW"/>
</dbReference>
<dbReference type="CDD" id="cd02000">
    <property type="entry name" value="TPP_E1_PDC_ADC_BCADC"/>
    <property type="match status" value="1"/>
</dbReference>
<dbReference type="FunFam" id="3.40.50.970:FF:000020">
    <property type="entry name" value="Pyruvate dehydrogenase E1 component subunit alpha, mitochondrial"/>
    <property type="match status" value="1"/>
</dbReference>
<dbReference type="Gene3D" id="3.40.50.970">
    <property type="match status" value="1"/>
</dbReference>
<dbReference type="InterPro" id="IPR001017">
    <property type="entry name" value="DH_E1"/>
</dbReference>
<dbReference type="InterPro" id="IPR050642">
    <property type="entry name" value="PDH_E1_Alpha_Subunit"/>
</dbReference>
<dbReference type="InterPro" id="IPR017597">
    <property type="entry name" value="Pyrv_DH_E1_asu_subgrp-y"/>
</dbReference>
<dbReference type="InterPro" id="IPR029061">
    <property type="entry name" value="THDP-binding"/>
</dbReference>
<dbReference type="NCBIfam" id="TIGR03182">
    <property type="entry name" value="PDH_E1_alph_y"/>
    <property type="match status" value="1"/>
</dbReference>
<dbReference type="PANTHER" id="PTHR11516:SF27">
    <property type="entry name" value="PYRUVATE DEHYDROGENASE E1 COMPONENT SUBUNIT ALPHA, TESTIS-SPECIFIC FORM, MITOCHONDRIAL"/>
    <property type="match status" value="1"/>
</dbReference>
<dbReference type="PANTHER" id="PTHR11516">
    <property type="entry name" value="PYRUVATE DEHYDROGENASE E1 COMPONENT, ALPHA SUBUNIT BACTERIAL AND ORGANELLAR"/>
    <property type="match status" value="1"/>
</dbReference>
<dbReference type="Pfam" id="PF00676">
    <property type="entry name" value="E1_dh"/>
    <property type="match status" value="1"/>
</dbReference>
<dbReference type="SUPFAM" id="SSF52518">
    <property type="entry name" value="Thiamin diphosphate-binding fold (THDP-binding)"/>
    <property type="match status" value="1"/>
</dbReference>
<sequence length="388" mass="42933">MLAAFISRVLRRVAQKSARRVLVASRNSSNDATFEIKKCDLYLLEEGPPVTTVLTRAEGLKYYRMMLTVRRMELKADQLYKQKFIRGFCHLCDGQEACCVGLEAGINPSDHVITSYRAHGVCYTRGLSVRSILAELTGRRGGCAKGKGGSMHMYTKNFYGGNGIVGAQGPLGAGIALACKYKGNDEICLTLYGDGAANQGQIAEAFNMAALWKLPCVFICENNLYGMGTSTERAAASPDYYKRGNFIPGLKVDGMDVLCVREATKFAANYCRSGKGPILMELQTYRYHGHSMSDPGVSYRTREEIQEVRSKRDPIIILQDRMVNSKLATVEELKEIGAEVRKEIDDAAQFATTDPEPHLEELGHHIYSSDSSFEVRGANPWIKFKSVS</sequence>
<accession>P29803</accession>
<accession>B2R9Q3</accession>
<accession>Q0VDI5</accession>
<accession>Q4VC02</accession>
<accession>Q6NXQ1</accession>
<proteinExistence type="evidence at protein level"/>
<reference key="1">
    <citation type="journal article" date="1990" name="Genomics">
        <title>A testis-specific form of the human pyruvate dehydrogenase E1 alpha subunit is coded for by an intronless gene on chromosome 4.</title>
        <authorList>
            <person name="Dahl H.-H.M."/>
            <person name="Brown R.M."/>
            <person name="Hutchison W.M."/>
            <person name="Maragos C."/>
            <person name="Brown G.K."/>
        </authorList>
    </citation>
    <scope>NUCLEOTIDE SEQUENCE [GENOMIC DNA]</scope>
    <source>
        <tissue>Testis</tissue>
    </source>
</reference>
<reference key="2">
    <citation type="journal article" date="2004" name="Nat. Genet.">
        <title>Complete sequencing and characterization of 21,243 full-length human cDNAs.</title>
        <authorList>
            <person name="Ota T."/>
            <person name="Suzuki Y."/>
            <person name="Nishikawa T."/>
            <person name="Otsuki T."/>
            <person name="Sugiyama T."/>
            <person name="Irie R."/>
            <person name="Wakamatsu A."/>
            <person name="Hayashi K."/>
            <person name="Sato H."/>
            <person name="Nagai K."/>
            <person name="Kimura K."/>
            <person name="Makita H."/>
            <person name="Sekine M."/>
            <person name="Obayashi M."/>
            <person name="Nishi T."/>
            <person name="Shibahara T."/>
            <person name="Tanaka T."/>
            <person name="Ishii S."/>
            <person name="Yamamoto J."/>
            <person name="Saito K."/>
            <person name="Kawai Y."/>
            <person name="Isono Y."/>
            <person name="Nakamura Y."/>
            <person name="Nagahari K."/>
            <person name="Murakami K."/>
            <person name="Yasuda T."/>
            <person name="Iwayanagi T."/>
            <person name="Wagatsuma M."/>
            <person name="Shiratori A."/>
            <person name="Sudo H."/>
            <person name="Hosoiri T."/>
            <person name="Kaku Y."/>
            <person name="Kodaira H."/>
            <person name="Kondo H."/>
            <person name="Sugawara M."/>
            <person name="Takahashi M."/>
            <person name="Kanda K."/>
            <person name="Yokoi T."/>
            <person name="Furuya T."/>
            <person name="Kikkawa E."/>
            <person name="Omura Y."/>
            <person name="Abe K."/>
            <person name="Kamihara K."/>
            <person name="Katsuta N."/>
            <person name="Sato K."/>
            <person name="Tanikawa M."/>
            <person name="Yamazaki M."/>
            <person name="Ninomiya K."/>
            <person name="Ishibashi T."/>
            <person name="Yamashita H."/>
            <person name="Murakawa K."/>
            <person name="Fujimori K."/>
            <person name="Tanai H."/>
            <person name="Kimata M."/>
            <person name="Watanabe M."/>
            <person name="Hiraoka S."/>
            <person name="Chiba Y."/>
            <person name="Ishida S."/>
            <person name="Ono Y."/>
            <person name="Takiguchi S."/>
            <person name="Watanabe S."/>
            <person name="Yosida M."/>
            <person name="Hotuta T."/>
            <person name="Kusano J."/>
            <person name="Kanehori K."/>
            <person name="Takahashi-Fujii A."/>
            <person name="Hara H."/>
            <person name="Tanase T.-O."/>
            <person name="Nomura Y."/>
            <person name="Togiya S."/>
            <person name="Komai F."/>
            <person name="Hara R."/>
            <person name="Takeuchi K."/>
            <person name="Arita M."/>
            <person name="Imose N."/>
            <person name="Musashino K."/>
            <person name="Yuuki H."/>
            <person name="Oshima A."/>
            <person name="Sasaki N."/>
            <person name="Aotsuka S."/>
            <person name="Yoshikawa Y."/>
            <person name="Matsunawa H."/>
            <person name="Ichihara T."/>
            <person name="Shiohata N."/>
            <person name="Sano S."/>
            <person name="Moriya S."/>
            <person name="Momiyama H."/>
            <person name="Satoh N."/>
            <person name="Takami S."/>
            <person name="Terashima Y."/>
            <person name="Suzuki O."/>
            <person name="Nakagawa S."/>
            <person name="Senoh A."/>
            <person name="Mizoguchi H."/>
            <person name="Goto Y."/>
            <person name="Shimizu F."/>
            <person name="Wakebe H."/>
            <person name="Hishigaki H."/>
            <person name="Watanabe T."/>
            <person name="Sugiyama A."/>
            <person name="Takemoto M."/>
            <person name="Kawakami B."/>
            <person name="Yamazaki M."/>
            <person name="Watanabe K."/>
            <person name="Kumagai A."/>
            <person name="Itakura S."/>
            <person name="Fukuzumi Y."/>
            <person name="Fujimori Y."/>
            <person name="Komiyama M."/>
            <person name="Tashiro H."/>
            <person name="Tanigami A."/>
            <person name="Fujiwara T."/>
            <person name="Ono T."/>
            <person name="Yamada K."/>
            <person name="Fujii Y."/>
            <person name="Ozaki K."/>
            <person name="Hirao M."/>
            <person name="Ohmori Y."/>
            <person name="Kawabata A."/>
            <person name="Hikiji T."/>
            <person name="Kobatake N."/>
            <person name="Inagaki H."/>
            <person name="Ikema Y."/>
            <person name="Okamoto S."/>
            <person name="Okitani R."/>
            <person name="Kawakami T."/>
            <person name="Noguchi S."/>
            <person name="Itoh T."/>
            <person name="Shigeta K."/>
            <person name="Senba T."/>
            <person name="Matsumura K."/>
            <person name="Nakajima Y."/>
            <person name="Mizuno T."/>
            <person name="Morinaga M."/>
            <person name="Sasaki M."/>
            <person name="Togashi T."/>
            <person name="Oyama M."/>
            <person name="Hata H."/>
            <person name="Watanabe M."/>
            <person name="Komatsu T."/>
            <person name="Mizushima-Sugano J."/>
            <person name="Satoh T."/>
            <person name="Shirai Y."/>
            <person name="Takahashi Y."/>
            <person name="Nakagawa K."/>
            <person name="Okumura K."/>
            <person name="Nagase T."/>
            <person name="Nomura N."/>
            <person name="Kikuchi H."/>
            <person name="Masuho Y."/>
            <person name="Yamashita R."/>
            <person name="Nakai K."/>
            <person name="Yada T."/>
            <person name="Nakamura Y."/>
            <person name="Ohara O."/>
            <person name="Isogai T."/>
            <person name="Sugano S."/>
        </authorList>
    </citation>
    <scope>NUCLEOTIDE SEQUENCE [LARGE SCALE MRNA]</scope>
    <source>
        <tissue>Testis</tissue>
    </source>
</reference>
<reference key="3">
    <citation type="journal article" date="2004" name="Genome Res.">
        <title>The status, quality, and expansion of the NIH full-length cDNA project: the Mammalian Gene Collection (MGC).</title>
        <authorList>
            <consortium name="The MGC Project Team"/>
        </authorList>
    </citation>
    <scope>NUCLEOTIDE SEQUENCE [LARGE SCALE MRNA]</scope>
    <source>
        <tissue>Testis</tissue>
    </source>
</reference>
<reference key="4">
    <citation type="journal article" date="2004" name="J. Biol. Chem.">
        <title>Organization of the cores of the mammalian pyruvate dehydrogenase complex formed by E2 and E2 plus the E3-binding protein and their capacities to bind the E1 and E3 components.</title>
        <authorList>
            <person name="Hiromasa Y."/>
            <person name="Fujisawa T."/>
            <person name="Aso Y."/>
            <person name="Roche T.E."/>
        </authorList>
    </citation>
    <scope>SUBUNIT</scope>
</reference>
<reference key="5">
    <citation type="journal article" date="2006" name="J. Biol. Chem.">
        <title>Characterization of testis-specific isoenzyme of human pyruvate dehydrogenase.</title>
        <authorList>
            <person name="Korotchkina L.G."/>
            <person name="Sidhu S."/>
            <person name="Patel M.S."/>
        </authorList>
    </citation>
    <scope>CATALYTIC ACTIVITY</scope>
    <scope>FUNCTION</scope>
    <scope>PHOSPHORYLATION AT SER-291 AND SER-298</scope>
    <scope>MUTAGENESIS OF SER-230; SER-291 AND SER-298</scope>
</reference>
<reference key="6">
    <citation type="journal article" date="2011" name="Sci. Signal.">
        <title>System-wide temporal characterization of the proteome and phosphoproteome of human embryonic stem cell differentiation.</title>
        <authorList>
            <person name="Rigbolt K.T."/>
            <person name="Prokhorova T.A."/>
            <person name="Akimov V."/>
            <person name="Henningsen J."/>
            <person name="Johansen P.T."/>
            <person name="Kratchmarova I."/>
            <person name="Kassem M."/>
            <person name="Mann M."/>
            <person name="Olsen J.V."/>
            <person name="Blagoev B."/>
        </authorList>
    </citation>
    <scope>IDENTIFICATION BY MASS SPECTROMETRY [LARGE SCALE ANALYSIS]</scope>
</reference>
<reference key="7">
    <citation type="journal article" date="2012" name="Gene">
        <title>Pyruvate dehydrogenase complex: mRNA and protein expression patterns of E1alpha subunit genes in human spermatogenesis.</title>
        <authorList>
            <person name="Pinheiro A."/>
            <person name="Silva M.J."/>
            <person name="Graca I."/>
            <person name="Silva J."/>
            <person name="Sa R."/>
            <person name="Sousa M."/>
            <person name="Barros A."/>
            <person name="Tavares de Almeida I."/>
            <person name="Rivera I."/>
        </authorList>
    </citation>
    <scope>TISSUE SPECIFICITY</scope>
</reference>
<reference key="8">
    <citation type="journal article" date="2018" name="Eur. J. Hum. Genet.">
        <title>Linked homozygous BMPR1B and PDHA2 variants in a consanguineous family with complex digit malformation and male infertility.</title>
        <authorList>
            <person name="Yildirim Y."/>
            <person name="Ouriachi T."/>
            <person name="Woehlbier U."/>
            <person name="Ouahioune W."/>
            <person name="Balkan M."/>
            <person name="Malik S."/>
            <person name="Tolun A."/>
        </authorList>
    </citation>
    <scope>INVOLVEMENT IN SPGF70</scope>
    <scope>VARIANT SPGF70 VAL-227</scope>
</reference>
<reference key="9">
    <citation type="journal article" date="2019" name="IScience">
        <title>Rewiring of the Human Mitochondrial Interactome during Neuronal Reprogramming Reveals Regulators of the Respirasome and Neurogenesis.</title>
        <authorList>
            <person name="Moutaoufik M.T."/>
            <person name="Malty R."/>
            <person name="Amin S."/>
            <person name="Zhang Q."/>
            <person name="Phanse S."/>
            <person name="Gagarinova A."/>
            <person name="Zilocchi M."/>
            <person name="Hoell L."/>
            <person name="Minic Z."/>
            <person name="Gagarinova M."/>
            <person name="Aoki H."/>
            <person name="Stockwell J."/>
            <person name="Jessulat M."/>
            <person name="Goebels F."/>
            <person name="Broderick K."/>
            <person name="Scott N.E."/>
            <person name="Vlasblom J."/>
            <person name="Musso G."/>
            <person name="Prasad B."/>
            <person name="Lamantea E."/>
            <person name="Garavaglia B."/>
            <person name="Rajput A."/>
            <person name="Murayama K."/>
            <person name="Okazaki Y."/>
            <person name="Foster L.J."/>
            <person name="Bader G.D."/>
            <person name="Cayabyab F.S."/>
            <person name="Babu M."/>
        </authorList>
    </citation>
    <scope>IDENTIFICATION BY MASS SPECTROMETRY</scope>
    <scope>PHOSPHORYLATION AT SER-291 AND SER-293</scope>
    <scope>MUTAGENESIS OF SER-291 AND SER-293</scope>
</reference>
<reference key="10">
    <citation type="journal article" date="2022" name="Am. J. Hum. Genet.">
        <title>Whole-exome sequencing improves the diagnosis and care of men with non-obstructive azoospermia.</title>
        <authorList>
            <person name="Kherraf Z.E."/>
            <person name="Cazin C."/>
            <person name="Bouker A."/>
            <person name="Fourati Ben Mustapha S."/>
            <person name="Hennebicq S."/>
            <person name="Septier A."/>
            <person name="Coutton C."/>
            <person name="Raymond L."/>
            <person name="Nouchy M."/>
            <person name="Thierry-Mieg N."/>
            <person name="Zouari R."/>
            <person name="Arnoult C."/>
            <person name="Ray P.F."/>
        </authorList>
    </citation>
    <scope>VARIANT SPGF70 VAL-227</scope>
</reference>